<feature type="chain" id="PRO_0000147026" description="Probable L-tyrosine/L-aspartate decarboxylase">
    <location>
        <begin position="1"/>
        <end position="384"/>
    </location>
</feature>
<feature type="modified residue" description="N6-(pyridoxal phosphate)lysine" evidence="1">
    <location>
        <position position="233"/>
    </location>
</feature>
<comment type="function">
    <text evidence="1">Catalyzes the decarboxylation of L-tyrosine to produce tyramine for methanofuran biosynthesis. Can also catalyze the decarboxylation of L-aspartate to produce beta-alanine for coenzyme A (CoA) biosynthesis.</text>
</comment>
<comment type="catalytic activity">
    <reaction evidence="1">
        <text>L-tyrosine + H(+) = tyramine + CO2</text>
        <dbReference type="Rhea" id="RHEA:14345"/>
        <dbReference type="ChEBI" id="CHEBI:15378"/>
        <dbReference type="ChEBI" id="CHEBI:16526"/>
        <dbReference type="ChEBI" id="CHEBI:58315"/>
        <dbReference type="ChEBI" id="CHEBI:327995"/>
        <dbReference type="EC" id="4.1.1.25"/>
    </reaction>
</comment>
<comment type="catalytic activity">
    <reaction evidence="1">
        <text>L-aspartate + H(+) = beta-alanine + CO2</text>
        <dbReference type="Rhea" id="RHEA:19497"/>
        <dbReference type="ChEBI" id="CHEBI:15378"/>
        <dbReference type="ChEBI" id="CHEBI:16526"/>
        <dbReference type="ChEBI" id="CHEBI:29991"/>
        <dbReference type="ChEBI" id="CHEBI:57966"/>
        <dbReference type="EC" id="4.1.1.11"/>
    </reaction>
</comment>
<comment type="cofactor">
    <cofactor evidence="1">
        <name>pyridoxal 5'-phosphate</name>
        <dbReference type="ChEBI" id="CHEBI:597326"/>
    </cofactor>
</comment>
<comment type="pathway">
    <text evidence="1">Cofactor biosynthesis; methanofuran biosynthesis.</text>
</comment>
<comment type="pathway">
    <text evidence="1">Cofactor biosynthesis; coenzyme A biosynthesis.</text>
</comment>
<comment type="similarity">
    <text evidence="1">Belongs to the group II decarboxylase family. MfnA subfamily.</text>
</comment>
<name>MFNA_METMP</name>
<accession>Q6M0Y7</accession>
<keyword id="KW-0210">Decarboxylase</keyword>
<keyword id="KW-0456">Lyase</keyword>
<keyword id="KW-0663">Pyridoxal phosphate</keyword>
<keyword id="KW-1185">Reference proteome</keyword>
<protein>
    <recommendedName>
        <fullName evidence="1">Probable L-tyrosine/L-aspartate decarboxylase</fullName>
        <shortName evidence="1">TDC/ADC</shortName>
        <ecNumber evidence="1">4.1.1.11</ecNumber>
        <ecNumber evidence="1">4.1.1.25</ecNumber>
    </recommendedName>
</protein>
<organism>
    <name type="scientific">Methanococcus maripaludis (strain DSM 14266 / JCM 13030 / NBRC 101832 / S2 / LL)</name>
    <dbReference type="NCBI Taxonomy" id="267377"/>
    <lineage>
        <taxon>Archaea</taxon>
        <taxon>Methanobacteriati</taxon>
        <taxon>Methanobacteriota</taxon>
        <taxon>Methanomada group</taxon>
        <taxon>Methanococci</taxon>
        <taxon>Methanococcales</taxon>
        <taxon>Methanococcaceae</taxon>
        <taxon>Methanococcus</taxon>
    </lineage>
</organism>
<reference key="1">
    <citation type="journal article" date="2004" name="J. Bacteriol.">
        <title>Complete genome sequence of the genetically tractable hydrogenotrophic methanogen Methanococcus maripaludis.</title>
        <authorList>
            <person name="Hendrickson E.L."/>
            <person name="Kaul R."/>
            <person name="Zhou Y."/>
            <person name="Bovee D."/>
            <person name="Chapman P."/>
            <person name="Chung J."/>
            <person name="Conway de Macario E."/>
            <person name="Dodsworth J.A."/>
            <person name="Gillett W."/>
            <person name="Graham D.E."/>
            <person name="Hackett M."/>
            <person name="Haydock A.K."/>
            <person name="Kang A."/>
            <person name="Land M.L."/>
            <person name="Levy R."/>
            <person name="Lie T.J."/>
            <person name="Major T.A."/>
            <person name="Moore B.C."/>
            <person name="Porat I."/>
            <person name="Palmeiri A."/>
            <person name="Rouse G."/>
            <person name="Saenphimmachak C."/>
            <person name="Soell D."/>
            <person name="Van Dien S."/>
            <person name="Wang T."/>
            <person name="Whitman W.B."/>
            <person name="Xia Q."/>
            <person name="Zhang Y."/>
            <person name="Larimer F.W."/>
            <person name="Olson M.V."/>
            <person name="Leigh J.A."/>
        </authorList>
    </citation>
    <scope>NUCLEOTIDE SEQUENCE [LARGE SCALE GENOMIC DNA]</scope>
    <source>
        <strain>DSM 14266 / JCM 13030 / NBRC 101832 / S2 / LL</strain>
    </source>
</reference>
<gene>
    <name evidence="1" type="primary">mfnA</name>
    <name type="ordered locus">MMP0131</name>
</gene>
<proteinExistence type="inferred from homology"/>
<sequence length="384" mass="43145">MDEQDILNELREYRNQDLKYEEGYILGSMCTKPHPMARKISEMFFETNLGDPGLFKGTSKLEKEVVSMIGGILHNKNAFGYLISGGTEANLTAMRAFKNISKSKGKPQNIIIPETAHFSFDKAKDMMDLNVVRPPLTKYFTMDVKFIKDYIEDSKNEVSGIVGIAGCTELGSIDNICELSKIAVENDILLHVDAAFGGFVIPFLDDKYKLDGYNYDFDFSLNGVSSITIDPHKMGLAPISAGGILFRDNMFKKYLDVDAPYLTEKQQATIIGTRSGVGVASTWGIMKLLGIDGYETLVNESMEKTMYLVKKAREYGFETAIDPVMNIVALNDENKHDTCMKLRDENWYVSVCRCVDALRIVVMPHLEIEHIDGFLESLSNTKKY</sequence>
<evidence type="ECO:0000255" key="1">
    <source>
        <dbReference type="HAMAP-Rule" id="MF_01610"/>
    </source>
</evidence>
<dbReference type="EC" id="4.1.1.11" evidence="1"/>
<dbReference type="EC" id="4.1.1.25" evidence="1"/>
<dbReference type="EMBL" id="BX950229">
    <property type="protein sequence ID" value="CAF29687.1"/>
    <property type="molecule type" value="Genomic_DNA"/>
</dbReference>
<dbReference type="RefSeq" id="WP_011170075.1">
    <property type="nucleotide sequence ID" value="NC_005791.1"/>
</dbReference>
<dbReference type="SMR" id="Q6M0Y7"/>
<dbReference type="STRING" id="267377.MMP0131"/>
<dbReference type="EnsemblBacteria" id="CAF29687">
    <property type="protein sequence ID" value="CAF29687"/>
    <property type="gene ID" value="MMP0131"/>
</dbReference>
<dbReference type="GeneID" id="2761743"/>
<dbReference type="KEGG" id="mmp:MMP0131"/>
<dbReference type="PATRIC" id="fig|267377.15.peg.132"/>
<dbReference type="eggNOG" id="arCOG00027">
    <property type="taxonomic scope" value="Archaea"/>
</dbReference>
<dbReference type="HOGENOM" id="CLU_028929_2_1_2"/>
<dbReference type="OrthoDB" id="56891at2157"/>
<dbReference type="UniPathway" id="UPA00080"/>
<dbReference type="UniPathway" id="UPA00241"/>
<dbReference type="Proteomes" id="UP000000590">
    <property type="component" value="Chromosome"/>
</dbReference>
<dbReference type="GO" id="GO:0004068">
    <property type="term" value="F:aspartate 1-decarboxylase activity"/>
    <property type="evidence" value="ECO:0007669"/>
    <property type="project" value="UniProtKB-UniRule"/>
</dbReference>
<dbReference type="GO" id="GO:0030170">
    <property type="term" value="F:pyridoxal phosphate binding"/>
    <property type="evidence" value="ECO:0007669"/>
    <property type="project" value="UniProtKB-UniRule"/>
</dbReference>
<dbReference type="GO" id="GO:0004837">
    <property type="term" value="F:tyrosine decarboxylase activity"/>
    <property type="evidence" value="ECO:0007669"/>
    <property type="project" value="UniProtKB-UniRule"/>
</dbReference>
<dbReference type="GO" id="GO:0019752">
    <property type="term" value="P:carboxylic acid metabolic process"/>
    <property type="evidence" value="ECO:0007669"/>
    <property type="project" value="InterPro"/>
</dbReference>
<dbReference type="GO" id="GO:0015937">
    <property type="term" value="P:coenzyme A biosynthetic process"/>
    <property type="evidence" value="ECO:0007669"/>
    <property type="project" value="UniProtKB-UniRule"/>
</dbReference>
<dbReference type="GO" id="GO:2001120">
    <property type="term" value="P:methanofuran biosynthetic process"/>
    <property type="evidence" value="ECO:0007669"/>
    <property type="project" value="UniProtKB-UniRule"/>
</dbReference>
<dbReference type="Gene3D" id="3.90.1150.10">
    <property type="entry name" value="Aspartate Aminotransferase, domain 1"/>
    <property type="match status" value="1"/>
</dbReference>
<dbReference type="Gene3D" id="3.40.640.10">
    <property type="entry name" value="Type I PLP-dependent aspartate aminotransferase-like (Major domain)"/>
    <property type="match status" value="1"/>
</dbReference>
<dbReference type="HAMAP" id="MF_01610">
    <property type="entry name" value="MfnA_decarbox"/>
    <property type="match status" value="1"/>
</dbReference>
<dbReference type="InterPro" id="IPR050477">
    <property type="entry name" value="GrpII_AminoAcid_Decarb"/>
</dbReference>
<dbReference type="InterPro" id="IPR020931">
    <property type="entry name" value="MfnA"/>
</dbReference>
<dbReference type="InterPro" id="IPR002129">
    <property type="entry name" value="PyrdxlP-dep_de-COase"/>
</dbReference>
<dbReference type="InterPro" id="IPR015424">
    <property type="entry name" value="PyrdxlP-dep_Trfase"/>
</dbReference>
<dbReference type="InterPro" id="IPR015421">
    <property type="entry name" value="PyrdxlP-dep_Trfase_major"/>
</dbReference>
<dbReference type="InterPro" id="IPR015422">
    <property type="entry name" value="PyrdxlP-dep_Trfase_small"/>
</dbReference>
<dbReference type="InterPro" id="IPR021115">
    <property type="entry name" value="Pyridoxal-P_BS"/>
</dbReference>
<dbReference type="NCBIfam" id="TIGR03812">
    <property type="entry name" value="tyr_de_CO2_Arch"/>
    <property type="match status" value="1"/>
</dbReference>
<dbReference type="PANTHER" id="PTHR42735">
    <property type="match status" value="1"/>
</dbReference>
<dbReference type="PANTHER" id="PTHR42735:SF6">
    <property type="entry name" value="SPHINGOSINE-1-PHOSPHATE LYASE 1"/>
    <property type="match status" value="1"/>
</dbReference>
<dbReference type="Pfam" id="PF00282">
    <property type="entry name" value="Pyridoxal_deC"/>
    <property type="match status" value="1"/>
</dbReference>
<dbReference type="SUPFAM" id="SSF53383">
    <property type="entry name" value="PLP-dependent transferases"/>
    <property type="match status" value="1"/>
</dbReference>
<dbReference type="PROSITE" id="PS00392">
    <property type="entry name" value="DDC_GAD_HDC_YDC"/>
    <property type="match status" value="1"/>
</dbReference>